<organism>
    <name type="scientific">Dictyostelium discoideum</name>
    <name type="common">Social amoeba</name>
    <dbReference type="NCBI Taxonomy" id="44689"/>
    <lineage>
        <taxon>Eukaryota</taxon>
        <taxon>Amoebozoa</taxon>
        <taxon>Evosea</taxon>
        <taxon>Eumycetozoa</taxon>
        <taxon>Dictyostelia</taxon>
        <taxon>Dictyosteliales</taxon>
        <taxon>Dictyosteliaceae</taxon>
        <taxon>Dictyostelium</taxon>
    </lineage>
</organism>
<keyword id="KW-0106">Calcium</keyword>
<keyword id="KW-0479">Metal-binding</keyword>
<keyword id="KW-1185">Reference proteome</keyword>
<keyword id="KW-0677">Repeat</keyword>
<comment type="cofactor">
    <cofactor evidence="1">
        <name>Ca(2+)</name>
        <dbReference type="ChEBI" id="CHEBI:29108"/>
    </cofactor>
</comment>
<comment type="developmental stage">
    <text evidence="3">Expressed at relatively stable levels until 12 hours of development and then goes up at the 14th hour and then decrease again.</text>
</comment>
<comment type="similarity">
    <text evidence="4">Belongs to the copine family.</text>
</comment>
<dbReference type="EMBL" id="AAFI02000164">
    <property type="protein sequence ID" value="EAL62125.1"/>
    <property type="molecule type" value="Genomic_DNA"/>
</dbReference>
<dbReference type="RefSeq" id="XP_635630.1">
    <property type="nucleotide sequence ID" value="XM_630538.1"/>
</dbReference>
<dbReference type="SMR" id="Q54FY7"/>
<dbReference type="FunCoup" id="Q54FY7">
    <property type="interactions" value="18"/>
</dbReference>
<dbReference type="STRING" id="44689.Q54FY7"/>
<dbReference type="PaxDb" id="44689-DDB0216242"/>
<dbReference type="EnsemblProtists" id="EAL62125">
    <property type="protein sequence ID" value="EAL62125"/>
    <property type="gene ID" value="DDB_G0290529"/>
</dbReference>
<dbReference type="GeneID" id="8627702"/>
<dbReference type="KEGG" id="ddi:DDB_G0290529"/>
<dbReference type="dictyBase" id="DDB_G0290529">
    <property type="gene designation" value="cpnE"/>
</dbReference>
<dbReference type="VEuPathDB" id="AmoebaDB:DDB_G0290529"/>
<dbReference type="eggNOG" id="KOG1327">
    <property type="taxonomic scope" value="Eukaryota"/>
</dbReference>
<dbReference type="HOGENOM" id="CLU_020452_3_2_1"/>
<dbReference type="InParanoid" id="Q54FY7"/>
<dbReference type="OMA" id="AHDSHSK"/>
<dbReference type="PhylomeDB" id="Q54FY7"/>
<dbReference type="Reactome" id="R-DDI-1483206">
    <property type="pathway name" value="Glycerophospholipid biosynthesis"/>
</dbReference>
<dbReference type="Reactome" id="R-DDI-6798695">
    <property type="pathway name" value="Neutrophil degranulation"/>
</dbReference>
<dbReference type="PRO" id="PR:Q54FY7"/>
<dbReference type="Proteomes" id="UP000002195">
    <property type="component" value="Chromosome 5"/>
</dbReference>
<dbReference type="GO" id="GO:0005829">
    <property type="term" value="C:cytosol"/>
    <property type="evidence" value="ECO:0000314"/>
    <property type="project" value="dictyBase"/>
</dbReference>
<dbReference type="GO" id="GO:0005886">
    <property type="term" value="C:plasma membrane"/>
    <property type="evidence" value="ECO:0000314"/>
    <property type="project" value="dictyBase"/>
</dbReference>
<dbReference type="GO" id="GO:0005544">
    <property type="term" value="F:calcium-dependent phospholipid binding"/>
    <property type="evidence" value="ECO:0000318"/>
    <property type="project" value="GO_Central"/>
</dbReference>
<dbReference type="GO" id="GO:0046872">
    <property type="term" value="F:metal ion binding"/>
    <property type="evidence" value="ECO:0007669"/>
    <property type="project" value="UniProtKB-KW"/>
</dbReference>
<dbReference type="GO" id="GO:0004674">
    <property type="term" value="F:protein serine/threonine kinase activity"/>
    <property type="evidence" value="ECO:0000250"/>
    <property type="project" value="dictyBase"/>
</dbReference>
<dbReference type="GO" id="GO:0071277">
    <property type="term" value="P:cellular response to calcium ion"/>
    <property type="evidence" value="ECO:0000314"/>
    <property type="project" value="dictyBase"/>
</dbReference>
<dbReference type="CDD" id="cd04048">
    <property type="entry name" value="C2A_Copine"/>
    <property type="match status" value="1"/>
</dbReference>
<dbReference type="CDD" id="cd04047">
    <property type="entry name" value="C2B_Copine"/>
    <property type="match status" value="1"/>
</dbReference>
<dbReference type="FunFam" id="2.60.40.150:FF:000219">
    <property type="entry name" value="Copine-E"/>
    <property type="match status" value="1"/>
</dbReference>
<dbReference type="Gene3D" id="2.60.40.150">
    <property type="entry name" value="C2 domain"/>
    <property type="match status" value="2"/>
</dbReference>
<dbReference type="InterPro" id="IPR000008">
    <property type="entry name" value="C2_dom"/>
</dbReference>
<dbReference type="InterPro" id="IPR035892">
    <property type="entry name" value="C2_domain_sf"/>
</dbReference>
<dbReference type="InterPro" id="IPR037768">
    <property type="entry name" value="C2B_Copine"/>
</dbReference>
<dbReference type="InterPro" id="IPR045052">
    <property type="entry name" value="Copine"/>
</dbReference>
<dbReference type="InterPro" id="IPR010734">
    <property type="entry name" value="Copine_C"/>
</dbReference>
<dbReference type="InterPro" id="IPR002035">
    <property type="entry name" value="VWF_A"/>
</dbReference>
<dbReference type="InterPro" id="IPR036465">
    <property type="entry name" value="vWFA_dom_sf"/>
</dbReference>
<dbReference type="PANTHER" id="PTHR10857">
    <property type="entry name" value="COPINE"/>
    <property type="match status" value="1"/>
</dbReference>
<dbReference type="PANTHER" id="PTHR10857:SF30">
    <property type="entry name" value="COPINE-B-RELATED"/>
    <property type="match status" value="1"/>
</dbReference>
<dbReference type="Pfam" id="PF00168">
    <property type="entry name" value="C2"/>
    <property type="match status" value="2"/>
</dbReference>
<dbReference type="Pfam" id="PF07002">
    <property type="entry name" value="Copine"/>
    <property type="match status" value="1"/>
</dbReference>
<dbReference type="SMART" id="SM00239">
    <property type="entry name" value="C2"/>
    <property type="match status" value="2"/>
</dbReference>
<dbReference type="SMART" id="SM00327">
    <property type="entry name" value="VWA"/>
    <property type="match status" value="1"/>
</dbReference>
<dbReference type="SUPFAM" id="SSF49562">
    <property type="entry name" value="C2 domain (Calcium/lipid-binding domain, CaLB)"/>
    <property type="match status" value="2"/>
</dbReference>
<dbReference type="SUPFAM" id="SSF53300">
    <property type="entry name" value="vWA-like"/>
    <property type="match status" value="1"/>
</dbReference>
<dbReference type="PROSITE" id="PS50004">
    <property type="entry name" value="C2"/>
    <property type="match status" value="2"/>
</dbReference>
<dbReference type="PROSITE" id="PS50234">
    <property type="entry name" value="VWFA"/>
    <property type="match status" value="1"/>
</dbReference>
<accession>Q54FY7</accession>
<proteinExistence type="evidence at transcript level"/>
<feature type="chain" id="PRO_0000330658" description="Copine-E">
    <location>
        <begin position="1"/>
        <end position="579"/>
    </location>
</feature>
<feature type="domain" description="C2 1" evidence="1">
    <location>
        <begin position="45"/>
        <end position="175"/>
    </location>
</feature>
<feature type="domain" description="C2 2" evidence="1">
    <location>
        <begin position="183"/>
        <end position="304"/>
    </location>
</feature>
<feature type="domain" description="VWFA" evidence="2">
    <location>
        <begin position="345"/>
        <end position="552"/>
    </location>
</feature>
<feature type="binding site" evidence="1">
    <location>
        <position position="80"/>
    </location>
    <ligand>
        <name>Ca(2+)</name>
        <dbReference type="ChEBI" id="CHEBI:29108"/>
        <label>1</label>
    </ligand>
</feature>
<feature type="binding site" evidence="1">
    <location>
        <position position="80"/>
    </location>
    <ligand>
        <name>Ca(2+)</name>
        <dbReference type="ChEBI" id="CHEBI:29108"/>
        <label>2</label>
    </ligand>
</feature>
<feature type="binding site" evidence="1">
    <location>
        <position position="86"/>
    </location>
    <ligand>
        <name>Ca(2+)</name>
        <dbReference type="ChEBI" id="CHEBI:29108"/>
        <label>1</label>
    </ligand>
</feature>
<feature type="binding site" evidence="1">
    <location>
        <position position="145"/>
    </location>
    <ligand>
        <name>Ca(2+)</name>
        <dbReference type="ChEBI" id="CHEBI:29108"/>
        <label>1</label>
    </ligand>
</feature>
<feature type="binding site" evidence="1">
    <location>
        <position position="145"/>
    </location>
    <ligand>
        <name>Ca(2+)</name>
        <dbReference type="ChEBI" id="CHEBI:29108"/>
        <label>2</label>
    </ligand>
</feature>
<feature type="binding site" evidence="1">
    <location>
        <position position="147"/>
    </location>
    <ligand>
        <name>Ca(2+)</name>
        <dbReference type="ChEBI" id="CHEBI:29108"/>
        <label>1</label>
    </ligand>
</feature>
<feature type="binding site" evidence="1">
    <location>
        <position position="147"/>
    </location>
    <ligand>
        <name>Ca(2+)</name>
        <dbReference type="ChEBI" id="CHEBI:29108"/>
        <label>2</label>
    </ligand>
</feature>
<feature type="binding site" evidence="1">
    <location>
        <position position="153"/>
    </location>
    <ligand>
        <name>Ca(2+)</name>
        <dbReference type="ChEBI" id="CHEBI:29108"/>
        <label>2</label>
    </ligand>
</feature>
<protein>
    <recommendedName>
        <fullName>Copine-E</fullName>
    </recommendedName>
</protein>
<reference key="1">
    <citation type="journal article" date="2005" name="Nature">
        <title>The genome of the social amoeba Dictyostelium discoideum.</title>
        <authorList>
            <person name="Eichinger L."/>
            <person name="Pachebat J.A."/>
            <person name="Gloeckner G."/>
            <person name="Rajandream M.A."/>
            <person name="Sucgang R."/>
            <person name="Berriman M."/>
            <person name="Song J."/>
            <person name="Olsen R."/>
            <person name="Szafranski K."/>
            <person name="Xu Q."/>
            <person name="Tunggal B."/>
            <person name="Kummerfeld S."/>
            <person name="Madera M."/>
            <person name="Konfortov B.A."/>
            <person name="Rivero F."/>
            <person name="Bankier A.T."/>
            <person name="Lehmann R."/>
            <person name="Hamlin N."/>
            <person name="Davies R."/>
            <person name="Gaudet P."/>
            <person name="Fey P."/>
            <person name="Pilcher K."/>
            <person name="Chen G."/>
            <person name="Saunders D."/>
            <person name="Sodergren E.J."/>
            <person name="Davis P."/>
            <person name="Kerhornou A."/>
            <person name="Nie X."/>
            <person name="Hall N."/>
            <person name="Anjard C."/>
            <person name="Hemphill L."/>
            <person name="Bason N."/>
            <person name="Farbrother P."/>
            <person name="Desany B."/>
            <person name="Just E."/>
            <person name="Morio T."/>
            <person name="Rost R."/>
            <person name="Churcher C.M."/>
            <person name="Cooper J."/>
            <person name="Haydock S."/>
            <person name="van Driessche N."/>
            <person name="Cronin A."/>
            <person name="Goodhead I."/>
            <person name="Muzny D.M."/>
            <person name="Mourier T."/>
            <person name="Pain A."/>
            <person name="Lu M."/>
            <person name="Harper D."/>
            <person name="Lindsay R."/>
            <person name="Hauser H."/>
            <person name="James K.D."/>
            <person name="Quiles M."/>
            <person name="Madan Babu M."/>
            <person name="Saito T."/>
            <person name="Buchrieser C."/>
            <person name="Wardroper A."/>
            <person name="Felder M."/>
            <person name="Thangavelu M."/>
            <person name="Johnson D."/>
            <person name="Knights A."/>
            <person name="Loulseged H."/>
            <person name="Mungall K.L."/>
            <person name="Oliver K."/>
            <person name="Price C."/>
            <person name="Quail M.A."/>
            <person name="Urushihara H."/>
            <person name="Hernandez J."/>
            <person name="Rabbinowitsch E."/>
            <person name="Steffen D."/>
            <person name="Sanders M."/>
            <person name="Ma J."/>
            <person name="Kohara Y."/>
            <person name="Sharp S."/>
            <person name="Simmonds M.N."/>
            <person name="Spiegler S."/>
            <person name="Tivey A."/>
            <person name="Sugano S."/>
            <person name="White B."/>
            <person name="Walker D."/>
            <person name="Woodward J.R."/>
            <person name="Winckler T."/>
            <person name="Tanaka Y."/>
            <person name="Shaulsky G."/>
            <person name="Schleicher M."/>
            <person name="Weinstock G.M."/>
            <person name="Rosenthal A."/>
            <person name="Cox E.C."/>
            <person name="Chisholm R.L."/>
            <person name="Gibbs R.A."/>
            <person name="Loomis W.F."/>
            <person name="Platzer M."/>
            <person name="Kay R.R."/>
            <person name="Williams J.G."/>
            <person name="Dear P.H."/>
            <person name="Noegel A.A."/>
            <person name="Barrell B.G."/>
            <person name="Kuspa A."/>
        </authorList>
    </citation>
    <scope>NUCLEOTIDE SEQUENCE [LARGE SCALE GENOMIC DNA]</scope>
    <source>
        <strain>AX4</strain>
    </source>
</reference>
<reference key="2">
    <citation type="journal article" date="2007" name="Eukaryot. Cell">
        <title>Copine A is required for cytokinesis, contractile vacuole function, and development in Dictyostelium.</title>
        <authorList>
            <person name="Damer C.K."/>
            <person name="Bayeva M."/>
            <person name="Kim P.S."/>
            <person name="Ho L.K."/>
            <person name="Eberhardt E.S."/>
            <person name="Socec C.I."/>
            <person name="Lee J.S."/>
            <person name="Bruce E.A."/>
            <person name="Goldman-Yassen A.E."/>
            <person name="Naliboff L.C."/>
        </authorList>
    </citation>
    <scope>DEVELOPMENTAL STAGE</scope>
</reference>
<evidence type="ECO:0000255" key="1">
    <source>
        <dbReference type="PROSITE-ProRule" id="PRU00041"/>
    </source>
</evidence>
<evidence type="ECO:0000255" key="2">
    <source>
        <dbReference type="PROSITE-ProRule" id="PRU00219"/>
    </source>
</evidence>
<evidence type="ECO:0000269" key="3">
    <source>
    </source>
</evidence>
<evidence type="ECO:0000305" key="4"/>
<name>CPNE_DICDI</name>
<gene>
    <name type="primary">cpnE</name>
    <name type="ORF">DDB_G0290529</name>
</gene>
<sequence length="579" mass="64348">MSDSSIVNLSKEGDSNFSSATINLSKVDDTVNVSNATINLSKVTIDPSNQMSNPSNQGINLSKCTKVELRFKCMNLKDMDTFSKSDPQIFVYEKKGNNNNNNNSKPILIGSTEMISNNLNPVFKKTVTIDYHFERIQNLKFEVLDIDGGGKNDTIGDFSITLGNIISKPGKKVIGEIKCNGKQTGTIEIIAEEIQETGQNIILKLQGSKLDKKDLFSSDPFFKIFKSSANGNLLVYQSPVIKSNINPIYNPIIFKLEEFNGGDMFRELTFEFWDYDTIGDNDFIGSFKTTTDEILKGQVREFTLINPKKLSKSSYKNSGKIVFTDARLIAQPTFIDYLSGGCEINLMIAIDCTASNGMPSDRTSLHYNTPTHESEYARSILAVGNVLAPYDSDGKIELLGFGAERFGGVTSHCFQFGPKAEARGIEEVLSTYNKVIPTIKLSYPTNFQEIIKHAHKKSIKGVDSKNQKYTILLILTDGEITDMEETIEEIVKASSKAPLSIVIVGVGIASFELMKKLDGDENQLSDKNGVIATRDIVQFVPFKKYENDPEQLAAETLCEIPEQLIGYMKSQNYFPNMKN</sequence>